<name>POL2_ARMV</name>
<reference key="1">
    <citation type="journal article" date="1990" name="Nucleic Acids Res.">
        <title>Nucleotide sequence of AMV-capsid protein-gene.</title>
        <authorList>
            <person name="Steinkellner H."/>
            <person name="Himmler G."/>
            <person name="Mattanovich D."/>
            <person name="Katinger H."/>
        </authorList>
    </citation>
    <scope>NUCLEOTIDE SEQUENCE [GENOMIC RNA]</scope>
    <scope>PROTEIN SEQUENCE OF 2-21</scope>
</reference>
<evidence type="ECO:0000250" key="1"/>
<evidence type="ECO:0000305" key="2"/>
<dbReference type="EMBL" id="X55460">
    <property type="protein sequence ID" value="CAA39108.1"/>
    <property type="status" value="ALT_SEQ"/>
    <property type="molecule type" value="Genomic_RNA"/>
</dbReference>
<dbReference type="PIR" id="S13720">
    <property type="entry name" value="S13720"/>
</dbReference>
<dbReference type="SMR" id="P24819"/>
<dbReference type="GO" id="GO:0044219">
    <property type="term" value="C:host cell plasmodesma"/>
    <property type="evidence" value="ECO:0007669"/>
    <property type="project" value="UniProtKB-SubCell"/>
</dbReference>
<dbReference type="GO" id="GO:0019028">
    <property type="term" value="C:viral capsid"/>
    <property type="evidence" value="ECO:0007669"/>
    <property type="project" value="UniProtKB-KW"/>
</dbReference>
<dbReference type="GO" id="GO:0005198">
    <property type="term" value="F:structural molecule activity"/>
    <property type="evidence" value="ECO:0007669"/>
    <property type="project" value="InterPro"/>
</dbReference>
<dbReference type="GO" id="GO:0046740">
    <property type="term" value="P:transport of virus in host, cell to cell"/>
    <property type="evidence" value="ECO:0007669"/>
    <property type="project" value="UniProtKB-KW"/>
</dbReference>
<dbReference type="Gene3D" id="2.60.120.20">
    <property type="match status" value="2"/>
</dbReference>
<dbReference type="InterPro" id="IPR005054">
    <property type="entry name" value="Nepo_coat"/>
</dbReference>
<dbReference type="InterPro" id="IPR005305">
    <property type="entry name" value="Nepo_coat_C"/>
</dbReference>
<dbReference type="InterPro" id="IPR005306">
    <property type="entry name" value="Nepo_coat_N"/>
</dbReference>
<dbReference type="InterPro" id="IPR029053">
    <property type="entry name" value="Viral_coat"/>
</dbReference>
<dbReference type="Pfam" id="PF03391">
    <property type="entry name" value="Nepo_coat"/>
    <property type="match status" value="1"/>
</dbReference>
<dbReference type="Pfam" id="PF03688">
    <property type="entry name" value="Nepo_coat_C"/>
    <property type="match status" value="1"/>
</dbReference>
<dbReference type="Pfam" id="PF03689">
    <property type="entry name" value="Nepo_coat_N"/>
    <property type="match status" value="1"/>
</dbReference>
<dbReference type="SUPFAM" id="SSF88633">
    <property type="entry name" value="Positive stranded ssRNA viruses"/>
    <property type="match status" value="3"/>
</dbReference>
<organismHost>
    <name type="scientific">Beta vulgaris subsp. vulgaris</name>
    <name type="common">Beet</name>
    <dbReference type="NCBI Taxonomy" id="3555"/>
</organismHost>
<organismHost>
    <name type="scientific">Cornus florida</name>
    <name type="common">Flowering dogwood</name>
    <dbReference type="NCBI Taxonomy" id="4283"/>
</organismHost>
<organismHost>
    <name type="scientific">Fragaria</name>
    <dbReference type="NCBI Taxonomy" id="3746"/>
</organismHost>
<organismHost>
    <name type="scientific">Humulus lupulus</name>
    <name type="common">European hop</name>
    <dbReference type="NCBI Taxonomy" id="3486"/>
</organismHost>
<organismHost>
    <name type="scientific">Ligustrum</name>
    <name type="common">privets</name>
    <dbReference type="NCBI Taxonomy" id="13596"/>
</organismHost>
<organismHost>
    <name type="scientific">Olea europaea</name>
    <name type="common">Common olive</name>
    <dbReference type="NCBI Taxonomy" id="4146"/>
</organismHost>
<organismHost>
    <name type="scientific">Phlox</name>
    <name type="common">phloxes</name>
    <dbReference type="NCBI Taxonomy" id="40749"/>
</organismHost>
<organismHost>
    <name type="scientific">Rubus idaeus</name>
    <name type="common">Raspberry</name>
    <dbReference type="NCBI Taxonomy" id="32247"/>
</organismHost>
<organismHost>
    <name type="scientific">Syringa vulgaris</name>
    <name type="common">Common lilac</name>
    <dbReference type="NCBI Taxonomy" id="34270"/>
</organismHost>
<organismHost>
    <name type="scientific">Vitis vinifera</name>
    <name type="common">Grape</name>
    <dbReference type="NCBI Taxonomy" id="29760"/>
</organismHost>
<feature type="chain" id="PRO_0000037092" description="Movement protein" evidence="1">
    <location>
        <begin position="1" status="less than"/>
        <end position="1"/>
    </location>
</feature>
<feature type="chain" id="PRO_0000037093" description="Coat protein" evidence="1">
    <location>
        <begin position="2"/>
        <end position="506"/>
    </location>
</feature>
<feature type="non-terminal residue">
    <location>
        <position position="1"/>
    </location>
</feature>
<keyword id="KW-0167">Capsid protein</keyword>
<keyword id="KW-0903">Direct protein sequencing</keyword>
<keyword id="KW-1031">Host cell junction</keyword>
<keyword id="KW-0813">Transport</keyword>
<keyword id="KW-0916">Viral movement protein</keyword>
<keyword id="KW-0946">Virion</keyword>
<protein>
    <recommendedName>
        <fullName>RNA2 polyprotein</fullName>
    </recommendedName>
    <alternativeName>
        <fullName>P2</fullName>
    </alternativeName>
    <component>
        <recommendedName>
            <fullName>Movement protein</fullName>
        </recommendedName>
        <alternativeName>
            <fullName>2B-MP</fullName>
        </alternativeName>
    </component>
    <component>
        <recommendedName>
            <fullName>Coat protein</fullName>
        </recommendedName>
        <alternativeName>
            <fullName>2C-CP</fullName>
        </alternativeName>
    </component>
</protein>
<organism>
    <name type="scientific">Arabis mosaic virus</name>
    <name type="common">ArMV</name>
    <dbReference type="NCBI Taxonomy" id="12271"/>
    <lineage>
        <taxon>Viruses</taxon>
        <taxon>Riboviria</taxon>
        <taxon>Orthornavirae</taxon>
        <taxon>Pisuviricota</taxon>
        <taxon>Pisoniviricetes</taxon>
        <taxon>Picornavirales</taxon>
        <taxon>Secoviridae</taxon>
        <taxon>Comovirinae</taxon>
        <taxon>Nepovirus</taxon>
        <taxon>Nepovirus arabis</taxon>
    </lineage>
</organism>
<accession>P24819</accession>
<sequence>RGLAGRGSVQVPKDCQAGIYLKTLDLRDMVSGFSGIQYEKWITAGIVMPNFKVVIRYPANAFTGITWVMSFDAYNRITSSISTTASPAYTLSVPHWLLHHKNGTTSCDLDYGELCGHAMWFGATTFESPKLHFTCLTGNNKELAADWEFVVELYAEFEAAKSFLGKPNFIYSLDAFNGSLKFLTIPPLEYDLSATSAYKSVSLLLGQTLVDGTHKVYNFNNTLLSYYLGIGGIVKGKVHVCSPCTYGIVLRVVSEWNGVTNNWNQLFKYPGCYIEEDGSFAIEIRSPYHRTPLRLIDAQSASSFTSTLNFYAISGPIAPSGETAKMPVVVQIEEIALPDLSVPSFPNDYFLWVDFSSFTVDVEEYVIGSRFFDISSTTSTVALGDNPFAHMIACHGLHHGILDLKLMWDLEGEFGKSSGGVTITKLCGDKATGMDGASRVCALQNMGCETELYIGNYAGANPNTALSLYSRWLAIKLDKAKSMKMLRILCKPRGNFEFYGRTCFKV</sequence>
<comment type="function">
    <text evidence="1">The movement protein is assembled into tubules that allow the transport of virions from cell to cell.</text>
</comment>
<comment type="subcellular location">
    <molecule>Movement protein</molecule>
    <subcellularLocation>
        <location evidence="1">Host cell junction</location>
        <location evidence="1">Host plasmodesma</location>
    </subcellularLocation>
    <text evidence="1">Assembles in tubules that are embedded within modified plasmodesmata.</text>
</comment>
<comment type="subcellular location">
    <molecule>Coat protein</molecule>
    <subcellularLocation>
        <location evidence="2">Virion</location>
    </subcellularLocation>
</comment>
<comment type="PTM">
    <text evidence="1">Specific enzymatic cleavages in vivo by the P1 encoded 3C-like protease yield mature proteins.</text>
</comment>
<comment type="miscellaneous">
    <text>Virions are comprised of 60 copies of the coat protein.</text>
</comment>
<comment type="similarity">
    <text evidence="2">Belongs to the nepoviruses RNA2 polyprotein family.</text>
</comment>
<proteinExistence type="evidence at protein level"/>